<proteinExistence type="inferred from homology"/>
<reference key="1">
    <citation type="journal article" date="2008" name="J. Bacteriol.">
        <title>The complete genome sequence of Escherichia coli DH10B: insights into the biology of a laboratory workhorse.</title>
        <authorList>
            <person name="Durfee T."/>
            <person name="Nelson R."/>
            <person name="Baldwin S."/>
            <person name="Plunkett G. III"/>
            <person name="Burland V."/>
            <person name="Mau B."/>
            <person name="Petrosino J.F."/>
            <person name="Qin X."/>
            <person name="Muzny D.M."/>
            <person name="Ayele M."/>
            <person name="Gibbs R.A."/>
            <person name="Csorgo B."/>
            <person name="Posfai G."/>
            <person name="Weinstock G.M."/>
            <person name="Blattner F.R."/>
        </authorList>
    </citation>
    <scope>NUCLEOTIDE SEQUENCE [LARGE SCALE GENOMIC DNA]</scope>
    <source>
        <strain>K12 / DH10B</strain>
    </source>
</reference>
<sequence>MLNKLSLLLKDAGISLTDHQKNQLIAYVNMLHKWNKAYNLTSVRDPNEMLVRHILDSIVVAPYLQGERFIDVGTGPGLPGIPLSIVRPEAHFTLLDSLGKRVRFLRQVQHELKLENIEPVQSRVEEFPSEPPFDGVISRAFASLNDMVSWCHHLPGEQGRFYALKGQMPEDEIALLPEEYQVESVVKLQVPALDGERHLVVIKANKI</sequence>
<dbReference type="EC" id="2.1.1.170" evidence="1"/>
<dbReference type="EMBL" id="CP000948">
    <property type="protein sequence ID" value="ACB04783.1"/>
    <property type="molecule type" value="Genomic_DNA"/>
</dbReference>
<dbReference type="RefSeq" id="WP_000932839.1">
    <property type="nucleotide sequence ID" value="NC_010473.1"/>
</dbReference>
<dbReference type="SMR" id="B1X9W8"/>
<dbReference type="GeneID" id="93778227"/>
<dbReference type="KEGG" id="ecd:ECDH10B_3927"/>
<dbReference type="HOGENOM" id="CLU_065341_2_2_6"/>
<dbReference type="GO" id="GO:0005829">
    <property type="term" value="C:cytosol"/>
    <property type="evidence" value="ECO:0007669"/>
    <property type="project" value="TreeGrafter"/>
</dbReference>
<dbReference type="GO" id="GO:0070043">
    <property type="term" value="F:rRNA (guanine-N7-)-methyltransferase activity"/>
    <property type="evidence" value="ECO:0007669"/>
    <property type="project" value="UniProtKB-UniRule"/>
</dbReference>
<dbReference type="CDD" id="cd02440">
    <property type="entry name" value="AdoMet_MTases"/>
    <property type="match status" value="1"/>
</dbReference>
<dbReference type="FunFam" id="3.40.50.150:FF:000032">
    <property type="entry name" value="Ribosomal RNA small subunit methyltransferase G"/>
    <property type="match status" value="1"/>
</dbReference>
<dbReference type="Gene3D" id="3.40.50.150">
    <property type="entry name" value="Vaccinia Virus protein VP39"/>
    <property type="match status" value="1"/>
</dbReference>
<dbReference type="HAMAP" id="MF_00074">
    <property type="entry name" value="16SrRNA_methyltr_G"/>
    <property type="match status" value="1"/>
</dbReference>
<dbReference type="InterPro" id="IPR003682">
    <property type="entry name" value="rRNA_ssu_MeTfrase_G"/>
</dbReference>
<dbReference type="InterPro" id="IPR029063">
    <property type="entry name" value="SAM-dependent_MTases_sf"/>
</dbReference>
<dbReference type="NCBIfam" id="TIGR00138">
    <property type="entry name" value="rsmG_gidB"/>
    <property type="match status" value="1"/>
</dbReference>
<dbReference type="PANTHER" id="PTHR31760">
    <property type="entry name" value="S-ADENOSYL-L-METHIONINE-DEPENDENT METHYLTRANSFERASES SUPERFAMILY PROTEIN"/>
    <property type="match status" value="1"/>
</dbReference>
<dbReference type="PANTHER" id="PTHR31760:SF0">
    <property type="entry name" value="S-ADENOSYL-L-METHIONINE-DEPENDENT METHYLTRANSFERASES SUPERFAMILY PROTEIN"/>
    <property type="match status" value="1"/>
</dbReference>
<dbReference type="Pfam" id="PF02527">
    <property type="entry name" value="GidB"/>
    <property type="match status" value="1"/>
</dbReference>
<dbReference type="PIRSF" id="PIRSF003078">
    <property type="entry name" value="GidB"/>
    <property type="match status" value="1"/>
</dbReference>
<dbReference type="SUPFAM" id="SSF53335">
    <property type="entry name" value="S-adenosyl-L-methionine-dependent methyltransferases"/>
    <property type="match status" value="1"/>
</dbReference>
<evidence type="ECO:0000255" key="1">
    <source>
        <dbReference type="HAMAP-Rule" id="MF_00074"/>
    </source>
</evidence>
<organism>
    <name type="scientific">Escherichia coli (strain K12 / DH10B)</name>
    <dbReference type="NCBI Taxonomy" id="316385"/>
    <lineage>
        <taxon>Bacteria</taxon>
        <taxon>Pseudomonadati</taxon>
        <taxon>Pseudomonadota</taxon>
        <taxon>Gammaproteobacteria</taxon>
        <taxon>Enterobacterales</taxon>
        <taxon>Enterobacteriaceae</taxon>
        <taxon>Escherichia</taxon>
    </lineage>
</organism>
<keyword id="KW-0963">Cytoplasm</keyword>
<keyword id="KW-0489">Methyltransferase</keyword>
<keyword id="KW-0698">rRNA processing</keyword>
<keyword id="KW-0949">S-adenosyl-L-methionine</keyword>
<keyword id="KW-0808">Transferase</keyword>
<name>RSMG_ECODH</name>
<comment type="function">
    <text evidence="1">Specifically methylates the N7 position of guanine in position 527 of 16S rRNA.</text>
</comment>
<comment type="catalytic activity">
    <reaction evidence="1">
        <text>guanosine(527) in 16S rRNA + S-adenosyl-L-methionine = N(7)-methylguanosine(527) in 16S rRNA + S-adenosyl-L-homocysteine</text>
        <dbReference type="Rhea" id="RHEA:42732"/>
        <dbReference type="Rhea" id="RHEA-COMP:10209"/>
        <dbReference type="Rhea" id="RHEA-COMP:10210"/>
        <dbReference type="ChEBI" id="CHEBI:57856"/>
        <dbReference type="ChEBI" id="CHEBI:59789"/>
        <dbReference type="ChEBI" id="CHEBI:74269"/>
        <dbReference type="ChEBI" id="CHEBI:74480"/>
        <dbReference type="EC" id="2.1.1.170"/>
    </reaction>
</comment>
<comment type="subcellular location">
    <subcellularLocation>
        <location evidence="1">Cytoplasm</location>
    </subcellularLocation>
</comment>
<comment type="similarity">
    <text evidence="1">Belongs to the methyltransferase superfamily. RNA methyltransferase RsmG family.</text>
</comment>
<accession>B1X9W8</accession>
<gene>
    <name evidence="1" type="primary">rsmG</name>
    <name type="ordered locus">ECDH10B_3927</name>
</gene>
<feature type="chain" id="PRO_1000092627" description="Ribosomal RNA small subunit methyltransferase G">
    <location>
        <begin position="1"/>
        <end position="207"/>
    </location>
</feature>
<feature type="binding site" evidence="1">
    <location>
        <position position="73"/>
    </location>
    <ligand>
        <name>S-adenosyl-L-methionine</name>
        <dbReference type="ChEBI" id="CHEBI:59789"/>
    </ligand>
</feature>
<feature type="binding site" evidence="1">
    <location>
        <position position="78"/>
    </location>
    <ligand>
        <name>S-adenosyl-L-methionine</name>
        <dbReference type="ChEBI" id="CHEBI:59789"/>
    </ligand>
</feature>
<feature type="binding site" evidence="1">
    <location>
        <begin position="124"/>
        <end position="125"/>
    </location>
    <ligand>
        <name>S-adenosyl-L-methionine</name>
        <dbReference type="ChEBI" id="CHEBI:59789"/>
    </ligand>
</feature>
<feature type="binding site" evidence="1">
    <location>
        <position position="139"/>
    </location>
    <ligand>
        <name>S-adenosyl-L-methionine</name>
        <dbReference type="ChEBI" id="CHEBI:59789"/>
    </ligand>
</feature>
<protein>
    <recommendedName>
        <fullName evidence="1">Ribosomal RNA small subunit methyltransferase G</fullName>
        <ecNumber evidence="1">2.1.1.170</ecNumber>
    </recommendedName>
    <alternativeName>
        <fullName evidence="1">16S rRNA 7-methylguanosine methyltransferase</fullName>
        <shortName evidence="1">16S rRNA m7G methyltransferase</shortName>
    </alternativeName>
</protein>